<feature type="chain" id="PRO_0000130045" description="Small ribosomal subunit protein uS19">
    <location>
        <begin position="1"/>
        <end position="153"/>
    </location>
</feature>
<reference key="1">
    <citation type="submission" date="2001-08" db="EMBL/GenBank/DDBJ databases">
        <title>Nucleotide sequence of an isolated mRNA from oil palm Elaeis oleifera encodes for 40S ribosomal protein S15 (rps15 gene).</title>
        <authorList>
            <person name="Shah F.H."/>
            <person name="Bhore S.J."/>
        </authorList>
    </citation>
    <scope>NUCLEOTIDE SEQUENCE [MRNA]</scope>
</reference>
<protein>
    <recommendedName>
        <fullName evidence="1">Small ribosomal subunit protein uS19</fullName>
    </recommendedName>
    <alternativeName>
        <fullName>40S ribosomal protein S15</fullName>
    </alternativeName>
</protein>
<accession>Q945U1</accession>
<gene>
    <name type="primary">RPS15</name>
</gene>
<evidence type="ECO:0000305" key="1"/>
<keyword id="KW-0687">Ribonucleoprotein</keyword>
<keyword id="KW-0689">Ribosomal protein</keyword>
<organism>
    <name type="scientific">Elaeis oleifera</name>
    <name type="common">American oil palm</name>
    <name type="synonym">Corozo oleifera</name>
    <dbReference type="NCBI Taxonomy" id="80265"/>
    <lineage>
        <taxon>Eukaryota</taxon>
        <taxon>Viridiplantae</taxon>
        <taxon>Streptophyta</taxon>
        <taxon>Embryophyta</taxon>
        <taxon>Tracheophyta</taxon>
        <taxon>Spermatophyta</taxon>
        <taxon>Magnoliopsida</taxon>
        <taxon>Liliopsida</taxon>
        <taxon>Arecaceae</taxon>
        <taxon>Arecoideae</taxon>
        <taxon>Cocoseae</taxon>
        <taxon>Elaeidinae</taxon>
        <taxon>Elaeis</taxon>
    </lineage>
</organism>
<dbReference type="EMBL" id="AF404770">
    <property type="protein sequence ID" value="AAK97632.1"/>
    <property type="molecule type" value="mRNA"/>
</dbReference>
<dbReference type="SMR" id="Q945U1"/>
<dbReference type="GO" id="GO:0022627">
    <property type="term" value="C:cytosolic small ribosomal subunit"/>
    <property type="evidence" value="ECO:0007669"/>
    <property type="project" value="TreeGrafter"/>
</dbReference>
<dbReference type="GO" id="GO:0003723">
    <property type="term" value="F:RNA binding"/>
    <property type="evidence" value="ECO:0007669"/>
    <property type="project" value="InterPro"/>
</dbReference>
<dbReference type="GO" id="GO:0003735">
    <property type="term" value="F:structural constituent of ribosome"/>
    <property type="evidence" value="ECO:0007669"/>
    <property type="project" value="InterPro"/>
</dbReference>
<dbReference type="GO" id="GO:0000028">
    <property type="term" value="P:ribosomal small subunit assembly"/>
    <property type="evidence" value="ECO:0007669"/>
    <property type="project" value="TreeGrafter"/>
</dbReference>
<dbReference type="GO" id="GO:0006412">
    <property type="term" value="P:translation"/>
    <property type="evidence" value="ECO:0007669"/>
    <property type="project" value="InterPro"/>
</dbReference>
<dbReference type="FunFam" id="3.30.860.10:FF:000002">
    <property type="entry name" value="40S ribosomal protein S15"/>
    <property type="match status" value="1"/>
</dbReference>
<dbReference type="Gene3D" id="3.30.860.10">
    <property type="entry name" value="30s Ribosomal Protein S19, Chain A"/>
    <property type="match status" value="1"/>
</dbReference>
<dbReference type="HAMAP" id="MF_00531">
    <property type="entry name" value="Ribosomal_uS19"/>
    <property type="match status" value="1"/>
</dbReference>
<dbReference type="InterPro" id="IPR002222">
    <property type="entry name" value="Ribosomal_uS19"/>
</dbReference>
<dbReference type="InterPro" id="IPR020934">
    <property type="entry name" value="Ribosomal_uS19_CS"/>
</dbReference>
<dbReference type="InterPro" id="IPR005713">
    <property type="entry name" value="Ribosomal_uS19_euk/arc"/>
</dbReference>
<dbReference type="InterPro" id="IPR023575">
    <property type="entry name" value="Ribosomal_uS19_SF"/>
</dbReference>
<dbReference type="NCBIfam" id="NF003121">
    <property type="entry name" value="PRK04038.1"/>
    <property type="match status" value="1"/>
</dbReference>
<dbReference type="NCBIfam" id="TIGR01025">
    <property type="entry name" value="uS19_arch"/>
    <property type="match status" value="1"/>
</dbReference>
<dbReference type="PANTHER" id="PTHR11880">
    <property type="entry name" value="RIBOSOMAL PROTEIN S19P FAMILY MEMBER"/>
    <property type="match status" value="1"/>
</dbReference>
<dbReference type="PANTHER" id="PTHR11880:SF53">
    <property type="entry name" value="SMALL RIBOSOMAL SUBUNIT PROTEIN US19U-RELATED"/>
    <property type="match status" value="1"/>
</dbReference>
<dbReference type="Pfam" id="PF00203">
    <property type="entry name" value="Ribosomal_S19"/>
    <property type="match status" value="1"/>
</dbReference>
<dbReference type="PIRSF" id="PIRSF002144">
    <property type="entry name" value="Ribosomal_S19"/>
    <property type="match status" value="1"/>
</dbReference>
<dbReference type="PRINTS" id="PR00975">
    <property type="entry name" value="RIBOSOMALS19"/>
</dbReference>
<dbReference type="SUPFAM" id="SSF54570">
    <property type="entry name" value="Ribosomal protein S19"/>
    <property type="match status" value="1"/>
</dbReference>
<dbReference type="PROSITE" id="PS00323">
    <property type="entry name" value="RIBOSOMAL_S19"/>
    <property type="match status" value="1"/>
</dbReference>
<comment type="similarity">
    <text evidence="1">Belongs to the universal ribosomal protein uS19 family.</text>
</comment>
<proteinExistence type="evidence at transcript level"/>
<sequence length="153" mass="17363">MADVSDAVDVGGAQPKKRTFRKFSYRGVDLDQLLDMGTDELVKLFHARARRRFQRGLKRKPMALIKKLRKAKRDAPPGEKPEPVRTHLRNMIIVPEMIGSIIGVYNGKTFNQVEIKPEMIGHYLAEFSISYKPVKHGRPGIGATHSSRFIPLK</sequence>
<name>RS15_ELAOL</name>